<comment type="function">
    <text evidence="8 9 10 11 12">Originally described as a core component of the circadian clock. The circadian clock, an internal time-keeping system, regulates various physiological processes through the generation of approximately 24 hour circadian rhythms in gene expression, which are translated into rhythms in metabolism and behavior. It is derived from the Latin roots 'circa' (about) and 'diem' (day) and acts as an important regulator of a wide array of physiological functions including metabolism, sleep, body temperature, blood pressure, endocrine, immune, cardiovascular, and renal function. Consists of two major components: the central clock, residing in the suprachiasmatic nucleus (SCN) of the brain, and the peripheral clocks that are present in nearly every tissue and organ system. Both the central and peripheral clocks can be reset by environmental cues, also known as Zeitgebers (German for 'timegivers'). The predominant Zeitgeber for the central clock is light, which is sensed by retina and signals directly to the SCN. The central clock entrains the peripheral clocks through neuronal and hormonal signals, body temperature and feeding-related cues, aligning all clocks with the external light/dark cycle. Circadian rhythms allow an organism to achieve temporal homeostasis with its environment at the molecular level by regulating gene expression to create a peak of protein expression once every 24 hours to control when a particular physiological process is most active with respect to the solar day. Transcription and translation of core clock components (CLOCK, NPAS2, BMAL1, BMAL2, PER1, PER2, PER3, CRY1 and CRY2) plays a critical role in rhythm generation, whereas delays imposed by post-translational modifications (PTMs) are important for determining the period (tau) of the rhythms (tau refers to the period of a rhythm and is the length, in time, of one complete cycle). A diurnal rhythm is synchronized with the day/night cycle, while the ultradian and infradian rhythms have a period shorter and longer than 24 hours, respectively. Disruptions in the circadian rhythms contribute to the pathology of cardiovascular diseases, cancer, metabolic syndromes and aging. A transcription/translation feedback loop (TTFL) forms the core of the molecular circadian clock mechanism. Transcription factors, CLOCK or NPAS2 and BMAL1 or BMAL2, form the positive limb of the feedback loop, act in the form of a heterodimer and activate the transcription of core clock genes and clock-controlled genes (involved in key metabolic processes), harboring E-box elements (5'-CACGTG-3') within their promoters. The core clock genes: PER1/2/3 and CRY1/2 which are transcriptional repressors form the negative limb of the feedback loop and interact with the CLOCK|NPAS2-BMAL1|BMAL2 heterodimer inhibiting its activity and thereby negatively regulating their own expression. This heterodimer also activates nuclear receptors NR1D1, NR1D2, RORA, RORB and RORG, which form a second feedback loop and which activate and repress BMAL1 transcription, respectively. Has a redundant role with the other PER proteins PER1 and PER2 and is not essential for the circadian rhythms maintenance. In contrast, plays an important role in sleep-wake timing and sleep homeostasis probably through the transcriptional regulation of sleep homeostasis-related genes, without influencing circadian parameters. Can bind heme.</text>
</comment>
<comment type="subunit">
    <text evidence="7">Homodimer. Component of the circadian core oscillator, which includes the CRY proteins, CLOCK or NPAS2, BMAL1 or BMAL2, CSNK1D and/or CSNK1E, TIMELESS and the PER proteins. Interacts directly with PER1, PER2, CRY1, CRY2, and TIMELESS; interaction with CRY1 and CRY2 is weak and not rhythmic. Interacts with FBXW11 and BTRC.</text>
</comment>
<comment type="interaction">
    <interactant intactId="EBI-2827813">
        <id>P56645</id>
    </interactant>
    <interactant intactId="EBI-1180783">
        <id>O96017</id>
        <label>CHEK2</label>
    </interactant>
    <organismsDiffer>false</organismsDiffer>
    <experiments>2</experiments>
</comment>
<comment type="interaction">
    <interactant intactId="EBI-2827813">
        <id>P56645</id>
    </interactant>
    <interactant intactId="EBI-2557276">
        <id>O15534</id>
        <label>PER1</label>
    </interactant>
    <organismsDiffer>false</organismsDiffer>
    <experiments>3</experiments>
</comment>
<comment type="subcellular location">
    <subcellularLocation>
        <location evidence="12">Cytoplasm</location>
    </subcellularLocation>
    <subcellularLocation>
        <location evidence="12">Nucleus</location>
    </subcellularLocation>
    <text evidence="2">Mainly cytoplasmic. Translocates to the nucleus through binding PER1, PER2, CRY1 or CRY2, but not TIMELESS.</text>
</comment>
<comment type="alternative products">
    <event type="alternative splicing"/>
    <isoform>
        <id>P56645-1</id>
        <name>1</name>
        <sequence type="displayed"/>
    </isoform>
    <isoform>
        <id>P56645-2</id>
        <name>2</name>
        <sequence type="described" ref="VSP_040326 VSP_040327 VSP_040328"/>
    </isoform>
</comment>
<comment type="PTM">
    <text evidence="2">Phosphorylation by CSNK1E is weak and appears to require association with PER1 and translocation to the nucleus.</text>
</comment>
<comment type="PTM">
    <text evidence="2">Ubiquitinated.</text>
</comment>
<comment type="polymorphism">
    <text evidence="5 8 9 10 11">The number of repeats of 18 amino acids in positions 966 to 1055 is polymorphic and varies among at least 2 different alleles. Alleles corresponding in size to a 4 (PER3.4) and 5 (PER3.5) repeats have been described. The sequence shown is that of allele PER3.5. In most populations around 10% of individuals are homozygous for the 5-repeat (PER3.5), whereas approximately 50% are homozygous for the 4-repeat (PER3.4). In some populations in Papua New Guinea the prevalence of the various genotypes appears to be reversed. These repeats and polymorphism are not present in non-primate mammals. Homozygosity for PER3.5 is more likely to show morning preference, whereas homozygosity for the PER3.4 associates with evening preferences. PER3.5 homozygous show vulnerability to sleep loss with a greater cognitive decline in response to total sleep deprivation (PubMed:11306557, PubMed:17346965, PubMed:19716732, PubMed:24439663, PubMed:24577121).</text>
</comment>
<comment type="disease" evidence="12">
    <disease id="DI-04696">
        <name>Advanced sleep phase syndrome, familial, 3</name>
        <acronym>FASPS3</acronym>
        <description>An autosomal dominant disorder characterized by very early sleep onset and offset. Individuals are 'morning larks' with a 4 hours advance of the sleep, temperature and melatonin rhythms.</description>
        <dbReference type="MIM" id="616882"/>
    </disease>
    <text>The disease is caused by variants affecting the gene represented in this entry.</text>
</comment>
<comment type="sequence caution" evidence="14">
    <conflict type="erroneous initiation">
        <sequence resource="EMBL-CDS" id="BAB32925"/>
    </conflict>
    <text>Extended N-terminus.</text>
</comment>
<organism>
    <name type="scientific">Homo sapiens</name>
    <name type="common">Human</name>
    <dbReference type="NCBI Taxonomy" id="9606"/>
    <lineage>
        <taxon>Eukaryota</taxon>
        <taxon>Metazoa</taxon>
        <taxon>Chordata</taxon>
        <taxon>Craniata</taxon>
        <taxon>Vertebrata</taxon>
        <taxon>Euteleostomi</taxon>
        <taxon>Mammalia</taxon>
        <taxon>Eutheria</taxon>
        <taxon>Euarchontoglires</taxon>
        <taxon>Primates</taxon>
        <taxon>Haplorrhini</taxon>
        <taxon>Catarrhini</taxon>
        <taxon>Hominidae</taxon>
        <taxon>Homo</taxon>
    </lineage>
</organism>
<evidence type="ECO:0000250" key="1"/>
<evidence type="ECO:0000250" key="2">
    <source>
        <dbReference type="UniProtKB" id="O70361"/>
    </source>
</evidence>
<evidence type="ECO:0000255" key="3">
    <source>
        <dbReference type="PROSITE-ProRule" id="PRU00140"/>
    </source>
</evidence>
<evidence type="ECO:0000256" key="4">
    <source>
        <dbReference type="SAM" id="MobiDB-lite"/>
    </source>
</evidence>
<evidence type="ECO:0000269" key="5">
    <source>
    </source>
</evidence>
<evidence type="ECO:0000269" key="6">
    <source>
    </source>
</evidence>
<evidence type="ECO:0000269" key="7">
    <source>
    </source>
</evidence>
<evidence type="ECO:0000269" key="8">
    <source>
    </source>
</evidence>
<evidence type="ECO:0000269" key="9">
    <source>
    </source>
</evidence>
<evidence type="ECO:0000269" key="10">
    <source>
    </source>
</evidence>
<evidence type="ECO:0000269" key="11">
    <source>
    </source>
</evidence>
<evidence type="ECO:0000269" key="12">
    <source>
    </source>
</evidence>
<evidence type="ECO:0000303" key="13">
    <source>
    </source>
</evidence>
<evidence type="ECO:0000305" key="14"/>
<evidence type="ECO:0007744" key="15">
    <source>
    </source>
</evidence>
<feature type="chain" id="PRO_0000162633" description="Period circadian protein homolog 3">
    <location>
        <begin position="1"/>
        <end position="1201"/>
    </location>
</feature>
<feature type="domain" description="PAS 1" evidence="3">
    <location>
        <begin position="121"/>
        <end position="188"/>
    </location>
</feature>
<feature type="domain" description="PAS 2" evidence="3">
    <location>
        <begin position="262"/>
        <end position="328"/>
    </location>
</feature>
<feature type="domain" description="PAC">
    <location>
        <begin position="337"/>
        <end position="380"/>
    </location>
</feature>
<feature type="repeat" description="1">
    <location>
        <begin position="965"/>
        <end position="982"/>
    </location>
</feature>
<feature type="repeat" description="2">
    <location>
        <begin position="983"/>
        <end position="1000"/>
    </location>
</feature>
<feature type="repeat" description="3">
    <location>
        <begin position="1001"/>
        <end position="1018"/>
    </location>
</feature>
<feature type="repeat" description="4">
    <location>
        <begin position="1019"/>
        <end position="1036"/>
    </location>
</feature>
<feature type="repeat" description="5">
    <location>
        <begin position="1037"/>
        <end position="1054"/>
    </location>
</feature>
<feature type="region of interest" description="Disordered" evidence="4">
    <location>
        <begin position="1"/>
        <end position="50"/>
    </location>
</feature>
<feature type="region of interest" description="CSNK1E binding domain" evidence="1">
    <location>
        <begin position="555"/>
        <end position="760"/>
    </location>
</feature>
<feature type="region of interest" description="Disordered" evidence="4">
    <location>
        <begin position="717"/>
        <end position="788"/>
    </location>
</feature>
<feature type="region of interest" description="Disordered" evidence="4">
    <location>
        <begin position="881"/>
        <end position="923"/>
    </location>
</feature>
<feature type="region of interest" description="Disordered" evidence="4">
    <location>
        <begin position="952"/>
        <end position="1067"/>
    </location>
</feature>
<feature type="region of interest" description="5 X 18 AA tandem repeats of S-[HP]-[AP]-T-[AT]-[GST]-[ATV]-L-S-[MT]-G-[LS]-P-P-[MRS]-[EKR]-[NST]-P">
    <location>
        <begin position="965"/>
        <end position="1054"/>
    </location>
</feature>
<feature type="region of interest" description="CRY binding domain" evidence="1">
    <location>
        <begin position="1123"/>
        <end position="1201"/>
    </location>
</feature>
<feature type="short sequence motif" description="Nuclear export signal 1" evidence="1">
    <location>
        <begin position="55"/>
        <end position="64"/>
    </location>
</feature>
<feature type="short sequence motif" description="Nuclear export signal 3" evidence="1">
    <location>
        <begin position="403"/>
        <end position="412"/>
    </location>
</feature>
<feature type="short sequence motif" description="Nuclear localization signal" evidence="1">
    <location>
        <begin position="729"/>
        <end position="745"/>
    </location>
</feature>
<feature type="short sequence motif" description="Nuclear export signal 2" evidence="1">
    <location>
        <begin position="925"/>
        <end position="932"/>
    </location>
</feature>
<feature type="compositionally biased region" description="Basic and acidic residues" evidence="4">
    <location>
        <begin position="13"/>
        <end position="50"/>
    </location>
</feature>
<feature type="compositionally biased region" description="Polar residues" evidence="4">
    <location>
        <begin position="721"/>
        <end position="731"/>
    </location>
</feature>
<feature type="compositionally biased region" description="Basic residues" evidence="4">
    <location>
        <begin position="733"/>
        <end position="743"/>
    </location>
</feature>
<feature type="compositionally biased region" description="Low complexity" evidence="4">
    <location>
        <begin position="767"/>
        <end position="783"/>
    </location>
</feature>
<feature type="compositionally biased region" description="Low complexity" evidence="4">
    <location>
        <begin position="881"/>
        <end position="890"/>
    </location>
</feature>
<feature type="compositionally biased region" description="Basic and acidic residues" evidence="4">
    <location>
        <begin position="900"/>
        <end position="911"/>
    </location>
</feature>
<feature type="compositionally biased region" description="Polar residues" evidence="4">
    <location>
        <begin position="957"/>
        <end position="976"/>
    </location>
</feature>
<feature type="compositionally biased region" description="Polar residues" evidence="4">
    <location>
        <begin position="983"/>
        <end position="994"/>
    </location>
</feature>
<feature type="compositionally biased region" description="Polar residues" evidence="4">
    <location>
        <begin position="1001"/>
        <end position="1012"/>
    </location>
</feature>
<feature type="compositionally biased region" description="Polar residues" evidence="4">
    <location>
        <begin position="1035"/>
        <end position="1050"/>
    </location>
</feature>
<feature type="compositionally biased region" description="Low complexity" evidence="4">
    <location>
        <begin position="1053"/>
        <end position="1067"/>
    </location>
</feature>
<feature type="modified residue" description="Phosphoserine" evidence="15">
    <location>
        <position position="919"/>
    </location>
</feature>
<feature type="modified residue" description="Phosphoserine" evidence="15">
    <location>
        <position position="994"/>
    </location>
</feature>
<feature type="modified residue" description="Phosphoserine" evidence="15">
    <location>
        <position position="1053"/>
    </location>
</feature>
<feature type="splice variant" id="VSP_040326" description="In isoform 2." evidence="13">
    <original>R</original>
    <variation>RA</variation>
    <location>
        <position position="197"/>
    </location>
</feature>
<feature type="splice variant" id="VSP_040327" description="In isoform 2." evidence="13">
    <original>G</original>
    <variation>GGESANGG</variation>
    <location>
        <position position="499"/>
    </location>
</feature>
<feature type="splice variant" id="VSP_040328" description="In isoform 2." evidence="13">
    <original>Y</original>
    <variation>YQ</variation>
    <location>
        <position position="954"/>
    </location>
</feature>
<feature type="sequence variant" id="VAR_076416" description="In FASPS3; decreased stability; decreased protein abundance." evidence="12">
    <original>PVH</original>
    <variation>AVR</variation>
    <location>
        <begin position="414"/>
        <end position="416"/>
    </location>
</feature>
<feature type="sequence variant" id="VAR_076417" description="In dbSNP:rs150812083." evidence="12">
    <original>P</original>
    <variation>A</variation>
    <location>
        <position position="414"/>
    </location>
</feature>
<feature type="sequence variant" id="VAR_076418" description="In dbSNP:rs139315125." evidence="12">
    <original>H</original>
    <variation>R</variation>
    <location>
        <position position="416"/>
    </location>
</feature>
<feature type="sequence variant" id="VAR_025532" description="Associated with delayed sleep phase syndrome (DSPS); dbSNP:rs10462020." evidence="5 6">
    <original>V</original>
    <variation>G</variation>
    <location>
        <position position="639"/>
    </location>
</feature>
<feature type="sequence variant" id="VAR_022428" description="In dbSNP:rs228696." evidence="5">
    <original>L</original>
    <variation>P</variation>
    <location>
        <position position="827"/>
    </location>
</feature>
<feature type="sequence variant" id="VAR_015514" description="In dbSNP:rs228697." evidence="5">
    <original>P</original>
    <variation>A</variation>
    <location>
        <position position="856"/>
    </location>
</feature>
<feature type="sequence variant" id="VAR_071049" description="Associated with eveningness and better cognitive performance during sleep deprivation experiments; dbSNP:rs57875989." evidence="5 8 9 10 11">
    <location>
        <begin position="1001"/>
        <end position="1018"/>
    </location>
</feature>
<feature type="sequence variant" id="VAR_028728" description="In dbSNP:rs1776342.">
    <original>A</original>
    <variation>T</variation>
    <location>
        <position position="1007"/>
    </location>
</feature>
<feature type="sequence variant" id="VAR_028729" description="In dbSNP:rs12033719.">
    <original>T</original>
    <variation>I</variation>
    <location>
        <position position="1010"/>
    </location>
</feature>
<feature type="sequence variant" id="VAR_025533" description="Only found in PER3.4 allele; dbSNP:rs2640909." evidence="5">
    <original>M</original>
    <variation>T</variation>
    <location>
        <position position="1028"/>
    </location>
</feature>
<feature type="sequence variant" id="VAR_028730" description="In dbSNP:rs2640905.">
    <original>S</original>
    <variation>C</variation>
    <location>
        <position position="1081"/>
    </location>
</feature>
<feature type="sequence variant" id="VAR_025534" description="In dbSNP:rs10462021." evidence="5">
    <original>H</original>
    <variation>R</variation>
    <location>
        <position position="1149"/>
    </location>
</feature>
<feature type="sequence conflict" description="In Ref. 1; BAB32925." evidence="14" ref="1">
    <original>Q</original>
    <variation>R</variation>
    <location>
        <position position="943"/>
    </location>
</feature>
<proteinExistence type="evidence at protein level"/>
<keyword id="KW-0025">Alternative splicing</keyword>
<keyword id="KW-0090">Biological rhythms</keyword>
<keyword id="KW-0963">Cytoplasm</keyword>
<keyword id="KW-0225">Disease variant</keyword>
<keyword id="KW-0539">Nucleus</keyword>
<keyword id="KW-0597">Phosphoprotein</keyword>
<keyword id="KW-1267">Proteomics identification</keyword>
<keyword id="KW-1185">Reference proteome</keyword>
<keyword id="KW-0677">Repeat</keyword>
<keyword id="KW-0804">Transcription</keyword>
<keyword id="KW-0805">Transcription regulation</keyword>
<keyword id="KW-0832">Ubl conjugation</keyword>
<reference key="1">
    <citation type="journal article" date="2001" name="EMBO Rep.">
        <title>Association of structural polymorphisms in the human period3 gene with delayed sleep phase syndrome.</title>
        <authorList>
            <person name="Ebisawa T."/>
            <person name="Uchiyama M."/>
            <person name="Kajimura N."/>
            <person name="Mishima K."/>
            <person name="Kamei Y."/>
            <person name="Katoh M."/>
            <person name="Watanabe T."/>
            <person name="Sekimoto M."/>
            <person name="Shibui K."/>
            <person name="Kim K."/>
            <person name="Kudo Y."/>
            <person name="Ozeki Y."/>
            <person name="Sugishita M."/>
            <person name="Toyoshima R."/>
            <person name="Inoue Y."/>
            <person name="Yamada N."/>
            <person name="Nagase T."/>
            <person name="Ozaki N."/>
            <person name="Ohara O."/>
            <person name="Ishida N."/>
            <person name="Okawa M."/>
            <person name="Takahashi K."/>
            <person name="Yamauchi T."/>
        </authorList>
    </citation>
    <scope>NUCLEOTIDE SEQUENCE [MRNA] (ISOFORM 2)</scope>
    <scope>NUCLEOTIDE SEQUENCE [GENOMIC DNA] OF 44-91 AND 724-882 (ISOFORMS 1/2)</scope>
    <scope>VARIANTS GLY-639; PRO-827; ALA-856; 1001-SER--PRO-1018 DEL; THR-1028 AND ARG-1149</scope>
</reference>
<reference key="2">
    <citation type="submission" date="2000-02" db="EMBL/GenBank/DDBJ databases">
        <authorList>
            <person name="Rhodes S."/>
            <person name="Huckle E."/>
        </authorList>
    </citation>
    <scope>NUCLEOTIDE SEQUENCE [LARGE SCALE MRNA] (ISOFORM 1)</scope>
</reference>
<reference key="3">
    <citation type="submission" date="2003-12" db="EMBL/GenBank/DDBJ databases">
        <title>Identification of a growth inhibition gene.</title>
        <authorList>
            <person name="Kim J.W."/>
        </authorList>
    </citation>
    <scope>NUCLEOTIDE SEQUENCE [LARGE SCALE MRNA] (ISOFORM 1)</scope>
</reference>
<reference key="4">
    <citation type="journal article" date="2006" name="Nature">
        <title>The DNA sequence and biological annotation of human chromosome 1.</title>
        <authorList>
            <person name="Gregory S.G."/>
            <person name="Barlow K.F."/>
            <person name="McLay K.E."/>
            <person name="Kaul R."/>
            <person name="Swarbreck D."/>
            <person name="Dunham A."/>
            <person name="Scott C.E."/>
            <person name="Howe K.L."/>
            <person name="Woodfine K."/>
            <person name="Spencer C.C.A."/>
            <person name="Jones M.C."/>
            <person name="Gillson C."/>
            <person name="Searle S."/>
            <person name="Zhou Y."/>
            <person name="Kokocinski F."/>
            <person name="McDonald L."/>
            <person name="Evans R."/>
            <person name="Phillips K."/>
            <person name="Atkinson A."/>
            <person name="Cooper R."/>
            <person name="Jones C."/>
            <person name="Hall R.E."/>
            <person name="Andrews T.D."/>
            <person name="Lloyd C."/>
            <person name="Ainscough R."/>
            <person name="Almeida J.P."/>
            <person name="Ambrose K.D."/>
            <person name="Anderson F."/>
            <person name="Andrew R.W."/>
            <person name="Ashwell R.I.S."/>
            <person name="Aubin K."/>
            <person name="Babbage A.K."/>
            <person name="Bagguley C.L."/>
            <person name="Bailey J."/>
            <person name="Beasley H."/>
            <person name="Bethel G."/>
            <person name="Bird C.P."/>
            <person name="Bray-Allen S."/>
            <person name="Brown J.Y."/>
            <person name="Brown A.J."/>
            <person name="Buckley D."/>
            <person name="Burton J."/>
            <person name="Bye J."/>
            <person name="Carder C."/>
            <person name="Chapman J.C."/>
            <person name="Clark S.Y."/>
            <person name="Clarke G."/>
            <person name="Clee C."/>
            <person name="Cobley V."/>
            <person name="Collier R.E."/>
            <person name="Corby N."/>
            <person name="Coville G.J."/>
            <person name="Davies J."/>
            <person name="Deadman R."/>
            <person name="Dunn M."/>
            <person name="Earthrowl M."/>
            <person name="Ellington A.G."/>
            <person name="Errington H."/>
            <person name="Frankish A."/>
            <person name="Frankland J."/>
            <person name="French L."/>
            <person name="Garner P."/>
            <person name="Garnett J."/>
            <person name="Gay L."/>
            <person name="Ghori M.R.J."/>
            <person name="Gibson R."/>
            <person name="Gilby L.M."/>
            <person name="Gillett W."/>
            <person name="Glithero R.J."/>
            <person name="Grafham D.V."/>
            <person name="Griffiths C."/>
            <person name="Griffiths-Jones S."/>
            <person name="Grocock R."/>
            <person name="Hammond S."/>
            <person name="Harrison E.S.I."/>
            <person name="Hart E."/>
            <person name="Haugen E."/>
            <person name="Heath P.D."/>
            <person name="Holmes S."/>
            <person name="Holt K."/>
            <person name="Howden P.J."/>
            <person name="Hunt A.R."/>
            <person name="Hunt S.E."/>
            <person name="Hunter G."/>
            <person name="Isherwood J."/>
            <person name="James R."/>
            <person name="Johnson C."/>
            <person name="Johnson D."/>
            <person name="Joy A."/>
            <person name="Kay M."/>
            <person name="Kershaw J.K."/>
            <person name="Kibukawa M."/>
            <person name="Kimberley A.M."/>
            <person name="King A."/>
            <person name="Knights A.J."/>
            <person name="Lad H."/>
            <person name="Laird G."/>
            <person name="Lawlor S."/>
            <person name="Leongamornlert D.A."/>
            <person name="Lloyd D.M."/>
            <person name="Loveland J."/>
            <person name="Lovell J."/>
            <person name="Lush M.J."/>
            <person name="Lyne R."/>
            <person name="Martin S."/>
            <person name="Mashreghi-Mohammadi M."/>
            <person name="Matthews L."/>
            <person name="Matthews N.S.W."/>
            <person name="McLaren S."/>
            <person name="Milne S."/>
            <person name="Mistry S."/>
            <person name="Moore M.J.F."/>
            <person name="Nickerson T."/>
            <person name="O'Dell C.N."/>
            <person name="Oliver K."/>
            <person name="Palmeiri A."/>
            <person name="Palmer S.A."/>
            <person name="Parker A."/>
            <person name="Patel D."/>
            <person name="Pearce A.V."/>
            <person name="Peck A.I."/>
            <person name="Pelan S."/>
            <person name="Phelps K."/>
            <person name="Phillimore B.J."/>
            <person name="Plumb R."/>
            <person name="Rajan J."/>
            <person name="Raymond C."/>
            <person name="Rouse G."/>
            <person name="Saenphimmachak C."/>
            <person name="Sehra H.K."/>
            <person name="Sheridan E."/>
            <person name="Shownkeen R."/>
            <person name="Sims S."/>
            <person name="Skuce C.D."/>
            <person name="Smith M."/>
            <person name="Steward C."/>
            <person name="Subramanian S."/>
            <person name="Sycamore N."/>
            <person name="Tracey A."/>
            <person name="Tromans A."/>
            <person name="Van Helmond Z."/>
            <person name="Wall M."/>
            <person name="Wallis J.M."/>
            <person name="White S."/>
            <person name="Whitehead S.L."/>
            <person name="Wilkinson J.E."/>
            <person name="Willey D.L."/>
            <person name="Williams H."/>
            <person name="Wilming L."/>
            <person name="Wray P.W."/>
            <person name="Wu Z."/>
            <person name="Coulson A."/>
            <person name="Vaudin M."/>
            <person name="Sulston J.E."/>
            <person name="Durbin R.M."/>
            <person name="Hubbard T."/>
            <person name="Wooster R."/>
            <person name="Dunham I."/>
            <person name="Carter N.P."/>
            <person name="McVean G."/>
            <person name="Ross M.T."/>
            <person name="Harrow J."/>
            <person name="Olson M.V."/>
            <person name="Beck S."/>
            <person name="Rogers J."/>
            <person name="Bentley D.R."/>
        </authorList>
    </citation>
    <scope>NUCLEOTIDE SEQUENCE [LARGE SCALE GENOMIC DNA]</scope>
</reference>
<reference key="5">
    <citation type="journal article" date="2013" name="J. Proteome Res.">
        <title>Toward a comprehensive characterization of a human cancer cell phosphoproteome.</title>
        <authorList>
            <person name="Zhou H."/>
            <person name="Di Palma S."/>
            <person name="Preisinger C."/>
            <person name="Peng M."/>
            <person name="Polat A.N."/>
            <person name="Heck A.J."/>
            <person name="Mohammed S."/>
        </authorList>
    </citation>
    <scope>PHOSPHORYLATION [LARGE SCALE ANALYSIS] AT SER-919; SER-994 AND SER-1053</scope>
    <scope>IDENTIFICATION BY MASS SPECTROMETRY [LARGE SCALE ANALYSIS]</scope>
    <source>
        <tissue>Erythroleukemia</tissue>
    </source>
</reference>
<reference key="6">
    <citation type="journal article" date="2003" name="Sleep">
        <title>A length polymorphism in the circadian clock gene Per3 is linked to delayed sleep phase syndrome and extreme diurnal preference.</title>
        <authorList>
            <person name="Archer S.N."/>
            <person name="Robilliard D.L."/>
            <person name="Skene D.J."/>
            <person name="Smits M."/>
            <person name="Williams A."/>
            <person name="Arendt J."/>
            <person name="von Schantz M."/>
        </authorList>
    </citation>
    <scope>IDENTIFICATION OF VARIANT 1001-SER--PRO-1018 DEL ASSOCIATED WITH DIURNAL PREFERENCE</scope>
</reference>
<reference key="7">
    <citation type="journal article" date="2005" name="J. Biol. Chem.">
        <title>SCFbeta-TRCP controls clock-dependent transcription via casein kinase 1-dependent degradation of the mammalian period-1 (Per1) protein.</title>
        <authorList>
            <person name="Shirogane T."/>
            <person name="Jin J."/>
            <person name="Ang X.L."/>
            <person name="Harper J.W."/>
        </authorList>
    </citation>
    <scope>INTERACTION WITH FBXW11 AND BTRC</scope>
</reference>
<reference key="8">
    <citation type="journal article" date="2007" name="Curr. Biol.">
        <title>PER3 polymorphism predicts sleep structure and waking performance.</title>
        <authorList>
            <person name="Viola A.U."/>
            <person name="Archer S.N."/>
            <person name="James L.M."/>
            <person name="Groeger J.A."/>
            <person name="Lo J.C."/>
            <person name="Skene D.J."/>
            <person name="von Schantz M."/>
            <person name="Dijk D.J."/>
        </authorList>
    </citation>
    <scope>FUNCTION IN SLEEP HOMEOSTASIS</scope>
    <scope>CHARACTERIZATION OF VARIANT 1001-SER--PRO-1018 DEL</scope>
</reference>
<reference key="9">
    <citation type="journal article" date="2010" name="Sleep Med. Rev.">
        <title>PERIOD3, circadian phenotypes, and sleep homeostasis.</title>
        <authorList>
            <person name="Dijk D.J."/>
            <person name="Archer S.N."/>
        </authorList>
    </citation>
    <scope>FUNCTION IN SLEEP HOMEOSTASIS</scope>
    <scope>CHARACTERIZATION OF VARIANT 1001-SER--PRO-1018 DEL</scope>
    <scope>REVIEW</scope>
</reference>
<reference key="10">
    <citation type="journal article" date="2013" name="Physiol. Rev.">
        <title>Metabolism and the circadian clock converge.</title>
        <authorList>
            <person name="Eckel-Mahan K."/>
            <person name="Sassone-Corsi P."/>
        </authorList>
    </citation>
    <scope>REVIEW</scope>
</reference>
<reference key="11">
    <citation type="journal article" date="2014" name="Cortex">
        <title>Sleep ability mediates individual differences in the vulnerability to sleep loss: evidence from a PER3 polymorphism.</title>
        <authorList>
            <person name="Maire M."/>
            <person name="Reichert C.F."/>
            <person name="Gabel V."/>
            <person name="Viola A.U."/>
            <person name="Strobel W."/>
            <person name="Krebs J."/>
            <person name="Landolt H.P."/>
            <person name="Bachmann V."/>
            <person name="Cajochen C."/>
            <person name="Schmidt C."/>
        </authorList>
    </citation>
    <scope>FUNCTION IN SLEEP HOMEOSTASIS</scope>
    <scope>CHARACTERIZATION OF VARIANT 1001-SER--PRO-1018 DEL</scope>
</reference>
<reference key="12">
    <citation type="journal article" date="2014" name="FASEB J.">
        <title>A human sleep homeostasis phenotype in mice expressing a primate-specific PER3 variable-number tandem-repeat coding-region polymorphism.</title>
        <authorList>
            <person name="Hasan S."/>
            <person name="van der Veen D.R."/>
            <person name="Winsky-Sommerer R."/>
            <person name="Hogben A."/>
            <person name="Laing E.E."/>
            <person name="Koentgen F."/>
            <person name="Dijk D.J."/>
            <person name="Archer S.N."/>
        </authorList>
    </citation>
    <scope>FUNCTION IN SLEEP HOMEOSTASIS</scope>
    <scope>CHARACTERIZATION OF VARIANT 1001-SER--PRO-1018 DEL</scope>
</reference>
<reference key="13">
    <citation type="journal article" date="2014" name="Trends Cell Biol.">
        <title>Molecular architecture of the mammalian circadian clock.</title>
        <authorList>
            <person name="Partch C.L."/>
            <person name="Green C.B."/>
            <person name="Takahashi J.S."/>
        </authorList>
    </citation>
    <scope>REVIEW</scope>
</reference>
<reference key="14">
    <citation type="journal article" date="2003" name="Neuropsychopharmacology">
        <title>Circadian clock-related polymorphisms in seasonal affective disorder and their relevance to diurnal preference.</title>
        <authorList>
            <person name="Johansson C."/>
            <person name="Willeit M."/>
            <person name="Smedh C."/>
            <person name="Ekholm J."/>
            <person name="Paunio T."/>
            <person name="Kieseppa T."/>
            <person name="Lichtermann D."/>
            <person name="Praschak-Rieder N."/>
            <person name="Neumeister A."/>
            <person name="Nilsson L.G."/>
            <person name="Kasper S."/>
            <person name="Peltonen L."/>
            <person name="Adolfsson R."/>
            <person name="Schalling M."/>
            <person name="Partonen T."/>
        </authorList>
    </citation>
    <scope>VARIANT GLY-639</scope>
</reference>
<reference key="15">
    <citation type="journal article" date="2016" name="Proc. Natl. Acad. Sci. U.S.A.">
        <title>A PERIOD3 variant causes a circadian phenotype and is associated with a seasonal mood trait.</title>
        <authorList>
            <person name="Zhang L."/>
            <person name="Hirano A."/>
            <person name="Hsu P.K."/>
            <person name="Jones C.R."/>
            <person name="Sakai N."/>
            <person name="Okuro M."/>
            <person name="McMahon T."/>
            <person name="Yamazaki M."/>
            <person name="Xu Y."/>
            <person name="Saigoh N."/>
            <person name="Saigoh K."/>
            <person name="Lin S.T."/>
            <person name="Kaasik K."/>
            <person name="Nishino S."/>
            <person name="Ptacek L.J."/>
            <person name="Fu Y.H."/>
        </authorList>
    </citation>
    <scope>INVOLVEMENT IN FASPS3</scope>
    <scope>VARIANT FASPS3 414-PRO--HIS-416 DELINS ALA-VAL-ARG</scope>
    <scope>VARIANTS ALA-414 AND ARG-416</scope>
    <scope>CHARACTERIZATION OF VARIANT FASPS3 414-PRO--HIS-416 DELINS ALA-VAL-ARG</scope>
    <scope>FUNCTION</scope>
    <scope>SUBCELLULAR LOCATION</scope>
</reference>
<name>PER3_HUMAN</name>
<accession>P56645</accession>
<accession>Q5H8X4</accession>
<accession>Q5H8X5</accession>
<accession>Q969K6</accession>
<accession>Q96S77</accession>
<accession>Q96S78</accession>
<accession>Q9C0J3</accession>
<accession>Q9NSP9</accession>
<accession>Q9UGU8</accession>
<protein>
    <recommendedName>
        <fullName>Period circadian protein homolog 3</fullName>
        <shortName>hPER3</shortName>
    </recommendedName>
    <alternativeName>
        <fullName>Cell growth-inhibiting gene 13 protein</fullName>
    </alternativeName>
    <alternativeName>
        <fullName>Circadian clock protein PERIOD 3</fullName>
    </alternativeName>
</protein>
<sequence length="1201" mass="131888">MPRGEAPGPGRRGAKDEALGEESGERWSPEFHLQRKLADSSHSEQQDRNRVSEELIMVVQEMKKYFPSERRNKPSTLDALNYALRCVHSVQANSEFFQILSQNGAPQADVSMYSLEELATIASEHTSKNTDTFVAVFSFLSGRLVHISEQAALILNRKKDVLASSHFVDLLAPQDMRVFYAHTARAQLPFWNNWTQRAARYECAPVKPFFCRIRGGEDRKQEKCHSPFRIIPYLIHVHHPAQPELESEPCCLTVVEKIHSGYEAPRIPVNKRIFTTTHTPGCVFLEVDEKAVPLLGYLPQDLIGTSILSYLHPEDRSLMVAIHQKVLKYAGHPPFEHSPIRFCTQNGDYIILDSSWSSFVNPWSRKISFIIGRHKVRTSPLNEDVFATKIKKMNDNDKDITELQEQIYKLLLQPVHVSVSSGYGSLGSSGSQEQLVSIASSSEASGHRVEETKAEQMTLQQVYASVNKIKNLGQQLYIESMTKSSFKPVTGTRTEPNGGGECKTFTSFHQTLKNNSVYTEPCEDLRNDEHSPSYQQINCIDSVIRYLKSYNIPALKRKCISCTNTTSSSSEEDKQNHKADDVQALQAGLQIPAIPKSEMPTNGRSIDTGGGAPQILSTAMLSLGSGISQCGYSSTIVHVPPPETARDATLFCEPWTLNMQPAPLTSEEFKHVGLTAAVLSAHTQKEEQNYVDKFREKILSSPYSSYLQQESRSKAKYSYFQGDSTSKQTRSAGCRKGKHKRKKLPEPPDSSSSNTGSGPRRGAHQNAQPCCPSAASSPHTSSPTFPPAAMVPSQAPYLVPAFPLPAATSPGREYAAPGTAPEGLHGLPLSEGLQPYPAFPFPYLDTFMTVFLPDPPVCPLLSPSFLPCPFLGATASSAISPSMSSAMSPTLDPPPSVTSQRREEEKWEAQSEGHPFITSRSSSPLQLNLLQEEMPRPSESPDQMRRNTCPQTEYCVTGNNGSESSPATTGALSTGSPPRENPSHPTASALSTGSPPMKNPSHPTASALSTGSPPMKNPSHPTASTLSMGLPPSRTPSHPTATVLSTGSPPSESPSRTGSAASGSSDSSIYLTSSVYSSKISQNGQQSQDVQKKETFPNVAEEPIWRMIRQTPERILMTYQVPERVKEVVLKEDLEKLESMRQQQPQFSHGQKEELAKVYNWIQSQTVTQEIDIQACVTCENEDSADGAATSCGQVLVEDSC</sequence>
<dbReference type="EMBL" id="AB047521">
    <property type="protein sequence ID" value="BAB63250.1"/>
    <property type="molecule type" value="Genomic_DNA"/>
</dbReference>
<dbReference type="EMBL" id="AB047530">
    <property type="protein sequence ID" value="BAB63251.1"/>
    <property type="molecule type" value="Genomic_DNA"/>
</dbReference>
<dbReference type="EMBL" id="AB047531">
    <property type="protein sequence ID" value="BAB63252.1"/>
    <property type="molecule type" value="Genomic_DNA"/>
</dbReference>
<dbReference type="EMBL" id="AB047532">
    <property type="protein sequence ID" value="BAB63253.1"/>
    <property type="molecule type" value="Genomic_DNA"/>
</dbReference>
<dbReference type="EMBL" id="AB047533">
    <property type="protein sequence ID" value="BAB63254.1"/>
    <property type="molecule type" value="Genomic_DNA"/>
</dbReference>
<dbReference type="EMBL" id="AB047534">
    <property type="protein sequence ID" value="BAB63255.1"/>
    <property type="molecule type" value="Genomic_DNA"/>
</dbReference>
<dbReference type="EMBL" id="AB047686">
    <property type="protein sequence ID" value="BAB32925.2"/>
    <property type="status" value="ALT_INIT"/>
    <property type="molecule type" value="mRNA"/>
</dbReference>
<dbReference type="EMBL" id="AL157954">
    <property type="protein sequence ID" value="CAB76084.1"/>
    <property type="molecule type" value="mRNA"/>
</dbReference>
<dbReference type="EMBL" id="AY493418">
    <property type="protein sequence ID" value="AAS72879.1"/>
    <property type="molecule type" value="mRNA"/>
</dbReference>
<dbReference type="EMBL" id="Z98884">
    <property type="status" value="NOT_ANNOTATED_CDS"/>
    <property type="molecule type" value="Genomic_DNA"/>
</dbReference>
<dbReference type="CCDS" id="CCDS72695.1">
    <molecule id="P56645-2"/>
</dbReference>
<dbReference type="CCDS" id="CCDS89.1">
    <molecule id="P56645-1"/>
</dbReference>
<dbReference type="RefSeq" id="NP_001276790.1">
    <property type="nucleotide sequence ID" value="NM_001289861.1"/>
</dbReference>
<dbReference type="RefSeq" id="NP_001276791.1">
    <molecule id="P56645-2"/>
    <property type="nucleotide sequence ID" value="NM_001289862.2"/>
</dbReference>
<dbReference type="RefSeq" id="NP_001276792.1">
    <property type="nucleotide sequence ID" value="NM_001289863.1"/>
</dbReference>
<dbReference type="RefSeq" id="NP_001276793.1">
    <property type="nucleotide sequence ID" value="NM_001289864.1"/>
</dbReference>
<dbReference type="RefSeq" id="NP_001364204.1">
    <molecule id="P56645-2"/>
    <property type="nucleotide sequence ID" value="NM_001377275.1"/>
</dbReference>
<dbReference type="RefSeq" id="NP_058515.1">
    <molecule id="P56645-1"/>
    <property type="nucleotide sequence ID" value="NM_016831.4"/>
</dbReference>
<dbReference type="RefSeq" id="XP_024306358.1">
    <molecule id="P56645-1"/>
    <property type="nucleotide sequence ID" value="XM_024450590.2"/>
</dbReference>
<dbReference type="RefSeq" id="XP_047289390.1">
    <molecule id="P56645-2"/>
    <property type="nucleotide sequence ID" value="XM_047433434.1"/>
</dbReference>
<dbReference type="RefSeq" id="XP_047289410.1">
    <molecule id="P56645-1"/>
    <property type="nucleotide sequence ID" value="XM_047433454.1"/>
</dbReference>
<dbReference type="RefSeq" id="XP_047289411.1">
    <molecule id="P56645-1"/>
    <property type="nucleotide sequence ID" value="XM_047433455.1"/>
</dbReference>
<dbReference type="RefSeq" id="XP_054195396.1">
    <molecule id="P56645-2"/>
    <property type="nucleotide sequence ID" value="XM_054339421.1"/>
</dbReference>
<dbReference type="RefSeq" id="XP_054195416.1">
    <molecule id="P56645-1"/>
    <property type="nucleotide sequence ID" value="XM_054339441.1"/>
</dbReference>
<dbReference type="RefSeq" id="XP_054195417.1">
    <molecule id="P56645-1"/>
    <property type="nucleotide sequence ID" value="XM_054339442.1"/>
</dbReference>
<dbReference type="SMR" id="P56645"/>
<dbReference type="BioGRID" id="114386">
    <property type="interactions" value="17"/>
</dbReference>
<dbReference type="ComplexPortal" id="CPX-3223">
    <property type="entry name" value="Cry1-Per3 complex"/>
</dbReference>
<dbReference type="ComplexPortal" id="CPX-3224">
    <property type="entry name" value="Cry2-Per3 complex"/>
</dbReference>
<dbReference type="FunCoup" id="P56645">
    <property type="interactions" value="2014"/>
</dbReference>
<dbReference type="IntAct" id="P56645">
    <property type="interactions" value="15"/>
</dbReference>
<dbReference type="MINT" id="P56645"/>
<dbReference type="STRING" id="9606.ENSP00000482093"/>
<dbReference type="GlyGen" id="P56645">
    <property type="glycosylation" value="1 site, 1 O-linked glycan (1 site)"/>
</dbReference>
<dbReference type="iPTMnet" id="P56645"/>
<dbReference type="PhosphoSitePlus" id="P56645"/>
<dbReference type="BioMuta" id="PER3"/>
<dbReference type="DMDM" id="317373535"/>
<dbReference type="jPOST" id="P56645"/>
<dbReference type="MassIVE" id="P56645"/>
<dbReference type="PaxDb" id="9606-ENSP00000482093"/>
<dbReference type="PeptideAtlas" id="P56645"/>
<dbReference type="ProteomicsDB" id="56931">
    <molecule id="P56645-1"/>
</dbReference>
<dbReference type="ProteomicsDB" id="56932">
    <molecule id="P56645-2"/>
</dbReference>
<dbReference type="Pumba" id="P56645"/>
<dbReference type="Antibodypedia" id="13182">
    <property type="antibodies" value="209 antibodies from 32 providers"/>
</dbReference>
<dbReference type="DNASU" id="8863"/>
<dbReference type="Ensembl" id="ENST00000361923.2">
    <molecule id="P56645-1"/>
    <property type="protein sequence ID" value="ENSP00000355031.2"/>
    <property type="gene ID" value="ENSG00000049246.15"/>
</dbReference>
<dbReference type="Ensembl" id="ENST00000377532.8">
    <molecule id="P56645-2"/>
    <property type="protein sequence ID" value="ENSP00000366755.3"/>
    <property type="gene ID" value="ENSG00000049246.15"/>
</dbReference>
<dbReference type="Ensembl" id="ENST00000613533.4">
    <molecule id="P56645-2"/>
    <property type="protein sequence ID" value="ENSP00000482093.1"/>
    <property type="gene ID" value="ENSG00000049246.15"/>
</dbReference>
<dbReference type="GeneID" id="8863"/>
<dbReference type="KEGG" id="hsa:8863"/>
<dbReference type="MANE-Select" id="ENST00000377532.8">
    <molecule id="P56645-2"/>
    <property type="protein sequence ID" value="ENSP00000366755.3"/>
    <property type="RefSeq nucleotide sequence ID" value="NM_001377275.1"/>
    <property type="RefSeq protein sequence ID" value="NP_001364204.1"/>
</dbReference>
<dbReference type="UCSC" id="uc001aop.5">
    <molecule id="P56645-1"/>
    <property type="organism name" value="human"/>
</dbReference>
<dbReference type="AGR" id="HGNC:8847"/>
<dbReference type="CTD" id="8863"/>
<dbReference type="DisGeNET" id="8863"/>
<dbReference type="GeneCards" id="PER3"/>
<dbReference type="HGNC" id="HGNC:8847">
    <property type="gene designation" value="PER3"/>
</dbReference>
<dbReference type="HPA" id="ENSG00000049246">
    <property type="expression patterns" value="Low tissue specificity"/>
</dbReference>
<dbReference type="MalaCards" id="PER3"/>
<dbReference type="MIM" id="603427">
    <property type="type" value="gene"/>
</dbReference>
<dbReference type="MIM" id="616882">
    <property type="type" value="phenotype"/>
</dbReference>
<dbReference type="neXtProt" id="NX_P56645"/>
<dbReference type="OpenTargets" id="ENSG00000049246"/>
<dbReference type="Orphanet" id="164736">
    <property type="disease" value="Familial advanced sleep-phase syndrome"/>
</dbReference>
<dbReference type="PharmGKB" id="PA33186"/>
<dbReference type="VEuPathDB" id="HostDB:ENSG00000049246"/>
<dbReference type="eggNOG" id="KOG3753">
    <property type="taxonomic scope" value="Eukaryota"/>
</dbReference>
<dbReference type="GeneTree" id="ENSGT00940000160817"/>
<dbReference type="HOGENOM" id="CLU_006667_0_1_1"/>
<dbReference type="InParanoid" id="P56645"/>
<dbReference type="OMA" id="GISQCSY"/>
<dbReference type="OrthoDB" id="7788983at2759"/>
<dbReference type="PAN-GO" id="P56645">
    <property type="GO annotations" value="7 GO annotations based on evolutionary models"/>
</dbReference>
<dbReference type="PhylomeDB" id="P56645"/>
<dbReference type="TreeFam" id="TF318445"/>
<dbReference type="PathwayCommons" id="P56645"/>
<dbReference type="SignaLink" id="P56645"/>
<dbReference type="SIGNOR" id="P56645"/>
<dbReference type="BioGRID-ORCS" id="8863">
    <property type="hits" value="16 hits in 1162 CRISPR screens"/>
</dbReference>
<dbReference type="ChiTaRS" id="PER3">
    <property type="organism name" value="human"/>
</dbReference>
<dbReference type="GeneWiki" id="PER3"/>
<dbReference type="GenomeRNAi" id="8863"/>
<dbReference type="Pharos" id="P56645">
    <property type="development level" value="Tbio"/>
</dbReference>
<dbReference type="PRO" id="PR:P56645"/>
<dbReference type="Proteomes" id="UP000005640">
    <property type="component" value="Chromosome 1"/>
</dbReference>
<dbReference type="RNAct" id="P56645">
    <property type="molecule type" value="protein"/>
</dbReference>
<dbReference type="Bgee" id="ENSG00000049246">
    <property type="expression patterns" value="Expressed in sural nerve and 198 other cell types or tissues"/>
</dbReference>
<dbReference type="ExpressionAtlas" id="P56645">
    <property type="expression patterns" value="baseline and differential"/>
</dbReference>
<dbReference type="GO" id="GO:0005737">
    <property type="term" value="C:cytoplasm"/>
    <property type="evidence" value="ECO:0000314"/>
    <property type="project" value="UniProtKB"/>
</dbReference>
<dbReference type="GO" id="GO:0005634">
    <property type="term" value="C:nucleus"/>
    <property type="evidence" value="ECO:0000314"/>
    <property type="project" value="UniProtKB"/>
</dbReference>
<dbReference type="GO" id="GO:0019900">
    <property type="term" value="F:kinase binding"/>
    <property type="evidence" value="ECO:0007669"/>
    <property type="project" value="Ensembl"/>
</dbReference>
<dbReference type="GO" id="GO:0000976">
    <property type="term" value="F:transcription cis-regulatory region binding"/>
    <property type="evidence" value="ECO:0000318"/>
    <property type="project" value="GO_Central"/>
</dbReference>
<dbReference type="GO" id="GO:0001222">
    <property type="term" value="F:transcription corepressor binding"/>
    <property type="evidence" value="ECO:0000318"/>
    <property type="project" value="GO_Central"/>
</dbReference>
<dbReference type="GO" id="GO:0031625">
    <property type="term" value="F:ubiquitin protein ligase binding"/>
    <property type="evidence" value="ECO:0007669"/>
    <property type="project" value="Ensembl"/>
</dbReference>
<dbReference type="GO" id="GO:0032922">
    <property type="term" value="P:circadian regulation of gene expression"/>
    <property type="evidence" value="ECO:0000318"/>
    <property type="project" value="GO_Central"/>
</dbReference>
<dbReference type="GO" id="GO:0043153">
    <property type="term" value="P:entrainment of circadian clock by photoperiod"/>
    <property type="evidence" value="ECO:0000318"/>
    <property type="project" value="GO_Central"/>
</dbReference>
<dbReference type="GO" id="GO:0000122">
    <property type="term" value="P:negative regulation of transcription by RNA polymerase II"/>
    <property type="evidence" value="ECO:0000314"/>
    <property type="project" value="UniProtKB"/>
</dbReference>
<dbReference type="GO" id="GO:0050821">
    <property type="term" value="P:protein stabilization"/>
    <property type="evidence" value="ECO:0000315"/>
    <property type="project" value="UniProtKB"/>
</dbReference>
<dbReference type="GO" id="GO:0045187">
    <property type="term" value="P:regulation of circadian sleep/wake cycle, sleep"/>
    <property type="evidence" value="ECO:0000315"/>
    <property type="project" value="UniProtKB"/>
</dbReference>
<dbReference type="CDD" id="cd00130">
    <property type="entry name" value="PAS"/>
    <property type="match status" value="1"/>
</dbReference>
<dbReference type="FunFam" id="3.30.450.20:FF:000013">
    <property type="entry name" value="Period circadian protein homolog 2"/>
    <property type="match status" value="1"/>
</dbReference>
<dbReference type="FunFam" id="3.30.450.20:FF:000004">
    <property type="entry name" value="Period circadian protein homolog 3"/>
    <property type="match status" value="1"/>
</dbReference>
<dbReference type="Gene3D" id="3.30.450.20">
    <property type="entry name" value="PAS domain"/>
    <property type="match status" value="2"/>
</dbReference>
<dbReference type="InterPro" id="IPR000014">
    <property type="entry name" value="PAS"/>
</dbReference>
<dbReference type="InterPro" id="IPR035965">
    <property type="entry name" value="PAS-like_dom_sf"/>
</dbReference>
<dbReference type="InterPro" id="IPR013655">
    <property type="entry name" value="PAS_fold_3"/>
</dbReference>
<dbReference type="InterPro" id="IPR048814">
    <property type="entry name" value="Per1-3_PAS-A"/>
</dbReference>
<dbReference type="InterPro" id="IPR022728">
    <property type="entry name" value="Period_circadian-like_C"/>
</dbReference>
<dbReference type="InterPro" id="IPR050760">
    <property type="entry name" value="Period_circadian_regulator"/>
</dbReference>
<dbReference type="PANTHER" id="PTHR11269">
    <property type="entry name" value="PERIOD CIRCADIAN PROTEIN"/>
    <property type="match status" value="1"/>
</dbReference>
<dbReference type="PANTHER" id="PTHR11269:SF13">
    <property type="entry name" value="PERIOD CIRCADIAN PROTEIN HOMOLOG 3"/>
    <property type="match status" value="1"/>
</dbReference>
<dbReference type="Pfam" id="PF23170">
    <property type="entry name" value="bHLH_PER"/>
    <property type="match status" value="1"/>
</dbReference>
<dbReference type="Pfam" id="PF08447">
    <property type="entry name" value="PAS_3"/>
    <property type="match status" value="1"/>
</dbReference>
<dbReference type="Pfam" id="PF21353">
    <property type="entry name" value="Per3-like_PAS-A"/>
    <property type="match status" value="1"/>
</dbReference>
<dbReference type="Pfam" id="PF12114">
    <property type="entry name" value="Period_C"/>
    <property type="match status" value="1"/>
</dbReference>
<dbReference type="SMART" id="SM00091">
    <property type="entry name" value="PAS"/>
    <property type="match status" value="2"/>
</dbReference>
<dbReference type="SUPFAM" id="SSF55785">
    <property type="entry name" value="PYP-like sensor domain (PAS domain)"/>
    <property type="match status" value="1"/>
</dbReference>
<dbReference type="PROSITE" id="PS50112">
    <property type="entry name" value="PAS"/>
    <property type="match status" value="1"/>
</dbReference>
<gene>
    <name type="primary">PER3</name>
    <name type="ORF">GIG13</name>
</gene>